<protein>
    <recommendedName>
        <fullName>Cytochrome c peroxidase, mitochondrial</fullName>
        <shortName>CCP</shortName>
        <ecNumber evidence="2">1.11.1.5</ecNumber>
    </recommendedName>
</protein>
<sequence length="377" mass="42112">MSFRAPNLIRSAAGRRASQTLNLRSQVIRRRFATEGGPEITKPSSPRSSNTRYLLAGVGIAAVGAAYYFYGTGRTAHDSANKADTVVRGAVATVEAKTGLRRGKDEYQKVYNRIAETLEKEGYDDGSLAPVLLRLAWHSSGTYNKEDGTGGSNFATMRFKPEAEHSANNGLHVAREHMEKIKQEFPWISYGDLWTLGGVCAVQESGGPTIPWRPGRIDGFEAQVTPDGRLPDASQAQDHLRFIFNRMGFNDQEIVALSGAHAMGRCHTNRSGFEGPWTFSPVTFSNQYFALLRDEPWQWKKWTGPAQYEDKNTKTLMMLPTDMALLKDKSFKKYVDIYADNEEKFFSDFAKAFSKLIELGVPERQWAGEPWTLGTSD</sequence>
<proteinExistence type="inferred from homology"/>
<gene>
    <name type="primary">CCP1</name>
    <name type="ordered locus">CNBD3710</name>
</gene>
<organism>
    <name type="scientific">Cryptococcus neoformans var. neoformans serotype D (strain B-3501A)</name>
    <name type="common">Filobasidiella neoformans</name>
    <dbReference type="NCBI Taxonomy" id="283643"/>
    <lineage>
        <taxon>Eukaryota</taxon>
        <taxon>Fungi</taxon>
        <taxon>Dikarya</taxon>
        <taxon>Basidiomycota</taxon>
        <taxon>Agaricomycotina</taxon>
        <taxon>Tremellomycetes</taxon>
        <taxon>Tremellales</taxon>
        <taxon>Cryptococcaceae</taxon>
        <taxon>Cryptococcus</taxon>
        <taxon>Cryptococcus neoformans species complex</taxon>
    </lineage>
</organism>
<feature type="transit peptide" description="Mitochondrion" evidence="3">
    <location>
        <begin position="1"/>
        <end position="17"/>
    </location>
</feature>
<feature type="chain" id="PRO_0000410185" description="Cytochrome c peroxidase, mitochondrial">
    <location>
        <begin position="18"/>
        <end position="377"/>
    </location>
</feature>
<feature type="active site" description="Proton acceptor" evidence="4 5">
    <location>
        <position position="138"/>
    </location>
</feature>
<feature type="active site" description="Tryptophan radical intermediate" evidence="1">
    <location>
        <position position="277"/>
    </location>
</feature>
<feature type="binding site" description="axial binding residue">
    <location>
        <position position="261"/>
    </location>
    <ligand>
        <name>heme b</name>
        <dbReference type="ChEBI" id="CHEBI:60344"/>
    </ligand>
    <ligandPart>
        <name>Fe</name>
        <dbReference type="ChEBI" id="CHEBI:18248"/>
    </ligandPart>
</feature>
<feature type="site" description="Transition state stabilizer" evidence="4">
    <location>
        <position position="134"/>
    </location>
</feature>
<dbReference type="EC" id="1.11.1.5" evidence="2"/>
<dbReference type="EMBL" id="AAEY01000020">
    <property type="protein sequence ID" value="EAL21317.1"/>
    <property type="molecule type" value="Genomic_DNA"/>
</dbReference>
<dbReference type="RefSeq" id="XP_775964.1">
    <property type="nucleotide sequence ID" value="XM_770871.1"/>
</dbReference>
<dbReference type="SMR" id="P0CP55"/>
<dbReference type="EnsemblFungi" id="AAW42936">
    <property type="protein sequence ID" value="AAW42936"/>
    <property type="gene ID" value="CND02630"/>
</dbReference>
<dbReference type="GeneID" id="4935760"/>
<dbReference type="KEGG" id="cnb:CNBD3710"/>
<dbReference type="VEuPathDB" id="FungiDB:CNBD3710"/>
<dbReference type="HOGENOM" id="CLU_036959_1_1_1"/>
<dbReference type="OrthoDB" id="2563at5206"/>
<dbReference type="GO" id="GO:0005758">
    <property type="term" value="C:mitochondrial intermembrane space"/>
    <property type="evidence" value="ECO:0007669"/>
    <property type="project" value="UniProtKB-SubCell"/>
</dbReference>
<dbReference type="GO" id="GO:0005759">
    <property type="term" value="C:mitochondrial matrix"/>
    <property type="evidence" value="ECO:0007669"/>
    <property type="project" value="UniProtKB-SubCell"/>
</dbReference>
<dbReference type="GO" id="GO:0004130">
    <property type="term" value="F:cytochrome-c peroxidase activity"/>
    <property type="evidence" value="ECO:0007669"/>
    <property type="project" value="UniProtKB-EC"/>
</dbReference>
<dbReference type="GO" id="GO:0020037">
    <property type="term" value="F:heme binding"/>
    <property type="evidence" value="ECO:0007669"/>
    <property type="project" value="InterPro"/>
</dbReference>
<dbReference type="GO" id="GO:0046872">
    <property type="term" value="F:metal ion binding"/>
    <property type="evidence" value="ECO:0007669"/>
    <property type="project" value="UniProtKB-KW"/>
</dbReference>
<dbReference type="GO" id="GO:0034599">
    <property type="term" value="P:cellular response to oxidative stress"/>
    <property type="evidence" value="ECO:0007669"/>
    <property type="project" value="EnsemblFungi"/>
</dbReference>
<dbReference type="GO" id="GO:0042744">
    <property type="term" value="P:hydrogen peroxide catabolic process"/>
    <property type="evidence" value="ECO:0007669"/>
    <property type="project" value="TreeGrafter"/>
</dbReference>
<dbReference type="GO" id="GO:0000302">
    <property type="term" value="P:response to reactive oxygen species"/>
    <property type="evidence" value="ECO:0007669"/>
    <property type="project" value="TreeGrafter"/>
</dbReference>
<dbReference type="CDD" id="cd00691">
    <property type="entry name" value="ascorbate_peroxidase"/>
    <property type="match status" value="1"/>
</dbReference>
<dbReference type="FunFam" id="1.10.420.10:FF:000009">
    <property type="entry name" value="Ascorbate peroxidase"/>
    <property type="match status" value="1"/>
</dbReference>
<dbReference type="FunFam" id="1.10.520.10:FF:000005">
    <property type="entry name" value="Cytochrome c peroxidase"/>
    <property type="match status" value="1"/>
</dbReference>
<dbReference type="Gene3D" id="1.10.520.10">
    <property type="match status" value="1"/>
</dbReference>
<dbReference type="Gene3D" id="1.10.420.10">
    <property type="entry name" value="Peroxidase, domain 2"/>
    <property type="match status" value="1"/>
</dbReference>
<dbReference type="InterPro" id="IPR044831">
    <property type="entry name" value="Ccp1-like"/>
</dbReference>
<dbReference type="InterPro" id="IPR002016">
    <property type="entry name" value="Haem_peroxidase"/>
</dbReference>
<dbReference type="InterPro" id="IPR010255">
    <property type="entry name" value="Haem_peroxidase_sf"/>
</dbReference>
<dbReference type="InterPro" id="IPR002207">
    <property type="entry name" value="Peroxidase_I"/>
</dbReference>
<dbReference type="InterPro" id="IPR019794">
    <property type="entry name" value="Peroxidases_AS"/>
</dbReference>
<dbReference type="InterPro" id="IPR019793">
    <property type="entry name" value="Peroxidases_heam-ligand_BS"/>
</dbReference>
<dbReference type="PANTHER" id="PTHR31356:SF58">
    <property type="entry name" value="CYTOCHROME C PEROXIDASE, MITOCHONDRIAL"/>
    <property type="match status" value="1"/>
</dbReference>
<dbReference type="PANTHER" id="PTHR31356">
    <property type="entry name" value="THYLAKOID LUMENAL 29 KDA PROTEIN, CHLOROPLASTIC-RELATED"/>
    <property type="match status" value="1"/>
</dbReference>
<dbReference type="Pfam" id="PF00141">
    <property type="entry name" value="peroxidase"/>
    <property type="match status" value="1"/>
</dbReference>
<dbReference type="PRINTS" id="PR00459">
    <property type="entry name" value="ASPEROXIDASE"/>
</dbReference>
<dbReference type="PRINTS" id="PR00458">
    <property type="entry name" value="PEROXIDASE"/>
</dbReference>
<dbReference type="SUPFAM" id="SSF48113">
    <property type="entry name" value="Heme-dependent peroxidases"/>
    <property type="match status" value="1"/>
</dbReference>
<dbReference type="PROSITE" id="PS00435">
    <property type="entry name" value="PEROXIDASE_1"/>
    <property type="match status" value="1"/>
</dbReference>
<dbReference type="PROSITE" id="PS00436">
    <property type="entry name" value="PEROXIDASE_2"/>
    <property type="match status" value="1"/>
</dbReference>
<dbReference type="PROSITE" id="PS50873">
    <property type="entry name" value="PEROXIDASE_4"/>
    <property type="match status" value="1"/>
</dbReference>
<accession>P0CP55</accession>
<accession>Q55TT2</accession>
<accession>Q5KIK5</accession>
<comment type="function">
    <text evidence="2">Destroys radicals which are normally produced within the cells and which are toxic to biological systems.</text>
</comment>
<comment type="catalytic activity">
    <reaction evidence="2">
        <text>2 Fe(II)-[cytochrome c] + H2O2 + 2 H(+) = 2 Fe(III)-[cytochrome c] + 2 H2O</text>
        <dbReference type="Rhea" id="RHEA:16581"/>
        <dbReference type="Rhea" id="RHEA-COMP:10350"/>
        <dbReference type="Rhea" id="RHEA-COMP:14399"/>
        <dbReference type="ChEBI" id="CHEBI:15377"/>
        <dbReference type="ChEBI" id="CHEBI:15378"/>
        <dbReference type="ChEBI" id="CHEBI:16240"/>
        <dbReference type="ChEBI" id="CHEBI:29033"/>
        <dbReference type="ChEBI" id="CHEBI:29034"/>
        <dbReference type="EC" id="1.11.1.5"/>
    </reaction>
</comment>
<comment type="cofactor">
    <cofactor evidence="4">
        <name>heme b</name>
        <dbReference type="ChEBI" id="CHEBI:60344"/>
    </cofactor>
    <text evidence="4">Binds 1 heme b (iron(II)-protoporphyrin IX) group per subunit.</text>
</comment>
<comment type="subunit">
    <text evidence="2">Forms a one-to-one complex with cytochrome c.</text>
</comment>
<comment type="subcellular location">
    <subcellularLocation>
        <location evidence="2">Mitochondrion matrix</location>
    </subcellularLocation>
    <subcellularLocation>
        <location evidence="2">Mitochondrion intermembrane space</location>
    </subcellularLocation>
</comment>
<comment type="similarity">
    <text evidence="6">Belongs to the peroxidase family. Cytochrome c peroxidase subfamily.</text>
</comment>
<evidence type="ECO:0000250" key="1"/>
<evidence type="ECO:0000250" key="2">
    <source>
        <dbReference type="UniProtKB" id="P00431"/>
    </source>
</evidence>
<evidence type="ECO:0000255" key="3"/>
<evidence type="ECO:0000255" key="4">
    <source>
        <dbReference type="PROSITE-ProRule" id="PRU00297"/>
    </source>
</evidence>
<evidence type="ECO:0000255" key="5">
    <source>
        <dbReference type="PROSITE-ProRule" id="PRU10012"/>
    </source>
</evidence>
<evidence type="ECO:0000305" key="6"/>
<keyword id="KW-0349">Heme</keyword>
<keyword id="KW-0408">Iron</keyword>
<keyword id="KW-0479">Metal-binding</keyword>
<keyword id="KW-0496">Mitochondrion</keyword>
<keyword id="KW-0560">Oxidoreductase</keyword>
<keyword id="KW-0575">Peroxidase</keyword>
<keyword id="KW-0809">Transit peptide</keyword>
<name>CCPR_CRYNB</name>
<reference key="1">
    <citation type="journal article" date="2005" name="Science">
        <title>The genome of the basidiomycetous yeast and human pathogen Cryptococcus neoformans.</title>
        <authorList>
            <person name="Loftus B.J."/>
            <person name="Fung E."/>
            <person name="Roncaglia P."/>
            <person name="Rowley D."/>
            <person name="Amedeo P."/>
            <person name="Bruno D."/>
            <person name="Vamathevan J."/>
            <person name="Miranda M."/>
            <person name="Anderson I.J."/>
            <person name="Fraser J.A."/>
            <person name="Allen J.E."/>
            <person name="Bosdet I.E."/>
            <person name="Brent M.R."/>
            <person name="Chiu R."/>
            <person name="Doering T.L."/>
            <person name="Donlin M.J."/>
            <person name="D'Souza C.A."/>
            <person name="Fox D.S."/>
            <person name="Grinberg V."/>
            <person name="Fu J."/>
            <person name="Fukushima M."/>
            <person name="Haas B.J."/>
            <person name="Huang J.C."/>
            <person name="Janbon G."/>
            <person name="Jones S.J.M."/>
            <person name="Koo H.L."/>
            <person name="Krzywinski M.I."/>
            <person name="Kwon-Chung K.J."/>
            <person name="Lengeler K.B."/>
            <person name="Maiti R."/>
            <person name="Marra M.A."/>
            <person name="Marra R.E."/>
            <person name="Mathewson C.A."/>
            <person name="Mitchell T.G."/>
            <person name="Pertea M."/>
            <person name="Riggs F.R."/>
            <person name="Salzberg S.L."/>
            <person name="Schein J.E."/>
            <person name="Shvartsbeyn A."/>
            <person name="Shin H."/>
            <person name="Shumway M."/>
            <person name="Specht C.A."/>
            <person name="Suh B.B."/>
            <person name="Tenney A."/>
            <person name="Utterback T.R."/>
            <person name="Wickes B.L."/>
            <person name="Wortman J.R."/>
            <person name="Wye N.H."/>
            <person name="Kronstad J.W."/>
            <person name="Lodge J.K."/>
            <person name="Heitman J."/>
            <person name="Davis R.W."/>
            <person name="Fraser C.M."/>
            <person name="Hyman R.W."/>
        </authorList>
    </citation>
    <scope>NUCLEOTIDE SEQUENCE [LARGE SCALE GENOMIC DNA]</scope>
    <source>
        <strain>B-3501A</strain>
    </source>
</reference>